<protein>
    <recommendedName>
        <fullName>Na(+)/H(+) antiporter subunit E1</fullName>
    </recommendedName>
    <alternativeName>
        <fullName>Mnh complex subunit E1</fullName>
    </alternativeName>
</protein>
<name>MNHE1_STAAC</name>
<accession>Q5HHD7</accession>
<proteinExistence type="inferred from homology"/>
<keyword id="KW-0050">Antiport</keyword>
<keyword id="KW-1003">Cell membrane</keyword>
<keyword id="KW-0375">Hydrogen ion transport</keyword>
<keyword id="KW-0406">Ion transport</keyword>
<keyword id="KW-0472">Membrane</keyword>
<keyword id="KW-0915">Sodium</keyword>
<keyword id="KW-0739">Sodium transport</keyword>
<keyword id="KW-0812">Transmembrane</keyword>
<keyword id="KW-1133">Transmembrane helix</keyword>
<keyword id="KW-0813">Transport</keyword>
<sequence length="159" mass="18319">MAVQLVLNFIIAVFWLFVTNSYTTNNFVLGFIFGLVLVYLLHRVLPGRFYVITLYRIIKLVIIFLIELIKANFDVLKIIIKPSIKNEPGFFVYHTDLKKDWQIVLLSNLITLTPGTVVLGVSDDRTKIYIHAIDFSTKEQEVESIKTSLEKIVREVGEI</sequence>
<evidence type="ECO:0000250" key="1"/>
<evidence type="ECO:0000255" key="2"/>
<evidence type="ECO:0000305" key="3"/>
<reference key="1">
    <citation type="journal article" date="2005" name="J. Bacteriol.">
        <title>Insights on evolution of virulence and resistance from the complete genome analysis of an early methicillin-resistant Staphylococcus aureus strain and a biofilm-producing methicillin-resistant Staphylococcus epidermidis strain.</title>
        <authorList>
            <person name="Gill S.R."/>
            <person name="Fouts D.E."/>
            <person name="Archer G.L."/>
            <person name="Mongodin E.F."/>
            <person name="DeBoy R.T."/>
            <person name="Ravel J."/>
            <person name="Paulsen I.T."/>
            <person name="Kolonay J.F."/>
            <person name="Brinkac L.M."/>
            <person name="Beanan M.J."/>
            <person name="Dodson R.J."/>
            <person name="Daugherty S.C."/>
            <person name="Madupu R."/>
            <person name="Angiuoli S.V."/>
            <person name="Durkin A.S."/>
            <person name="Haft D.H."/>
            <person name="Vamathevan J.J."/>
            <person name="Khouri H."/>
            <person name="Utterback T.R."/>
            <person name="Lee C."/>
            <person name="Dimitrov G."/>
            <person name="Jiang L."/>
            <person name="Qin H."/>
            <person name="Weidman J."/>
            <person name="Tran K."/>
            <person name="Kang K.H."/>
            <person name="Hance I.R."/>
            <person name="Nelson K.E."/>
            <person name="Fraser C.M."/>
        </authorList>
    </citation>
    <scope>NUCLEOTIDE SEQUENCE [LARGE SCALE GENOMIC DNA]</scope>
    <source>
        <strain>COL</strain>
    </source>
</reference>
<feature type="chain" id="PRO_0000217086" description="Na(+)/H(+) antiporter subunit E1">
    <location>
        <begin position="1"/>
        <end position="159"/>
    </location>
</feature>
<feature type="transmembrane region" description="Helical" evidence="2">
    <location>
        <begin position="5"/>
        <end position="22"/>
    </location>
</feature>
<feature type="transmembrane region" description="Helical" evidence="2">
    <location>
        <begin position="27"/>
        <end position="45"/>
    </location>
</feature>
<feature type="transmembrane region" description="Helical" evidence="2">
    <location>
        <begin position="52"/>
        <end position="69"/>
    </location>
</feature>
<feature type="transmembrane region" description="Helical" evidence="2">
    <location>
        <begin position="100"/>
        <end position="122"/>
    </location>
</feature>
<comment type="function">
    <text evidence="1">Mnh complex is a Na(+)/H(+) antiporter involved in Na(+) excretion.</text>
</comment>
<comment type="subunit">
    <text evidence="1">May form a heterooligomeric complex that consists of seven subunits: mnhA1, mnhB1, mnhC1, mnhD1, mnhE1, mnhF1 and mnhG1.</text>
</comment>
<comment type="subcellular location">
    <subcellularLocation>
        <location evidence="3">Cell membrane</location>
        <topology evidence="3">Multi-pass membrane protein</topology>
    </subcellularLocation>
</comment>
<comment type="similarity">
    <text evidence="3">Belongs to the CPA3 antiporters (TC 2.A.63) subunit E family.</text>
</comment>
<dbReference type="EMBL" id="CP000046">
    <property type="protein sequence ID" value="AAW37919.1"/>
    <property type="molecule type" value="Genomic_DNA"/>
</dbReference>
<dbReference type="RefSeq" id="WP_000290674.1">
    <property type="nucleotide sequence ID" value="NZ_JBGOFO010000002.1"/>
</dbReference>
<dbReference type="SMR" id="Q5HHD7"/>
<dbReference type="KEGG" id="sac:SACOL0951"/>
<dbReference type="HOGENOM" id="CLU_086615_3_2_9"/>
<dbReference type="Proteomes" id="UP000000530">
    <property type="component" value="Chromosome"/>
</dbReference>
<dbReference type="GO" id="GO:0005886">
    <property type="term" value="C:plasma membrane"/>
    <property type="evidence" value="ECO:0007669"/>
    <property type="project" value="UniProtKB-SubCell"/>
</dbReference>
<dbReference type="GO" id="GO:0015297">
    <property type="term" value="F:antiporter activity"/>
    <property type="evidence" value="ECO:0007669"/>
    <property type="project" value="UniProtKB-KW"/>
</dbReference>
<dbReference type="GO" id="GO:0008324">
    <property type="term" value="F:monoatomic cation transmembrane transporter activity"/>
    <property type="evidence" value="ECO:0007669"/>
    <property type="project" value="InterPro"/>
</dbReference>
<dbReference type="GO" id="GO:1902600">
    <property type="term" value="P:proton transmembrane transport"/>
    <property type="evidence" value="ECO:0007669"/>
    <property type="project" value="UniProtKB-KW"/>
</dbReference>
<dbReference type="GO" id="GO:0006814">
    <property type="term" value="P:sodium ion transport"/>
    <property type="evidence" value="ECO:0007669"/>
    <property type="project" value="UniProtKB-KW"/>
</dbReference>
<dbReference type="InterPro" id="IPR004847">
    <property type="entry name" value="Antiport_suE1"/>
</dbReference>
<dbReference type="InterPro" id="IPR002758">
    <property type="entry name" value="Cation_antiport_E"/>
</dbReference>
<dbReference type="NCBIfam" id="TIGR00942">
    <property type="entry name" value="2a6301s05"/>
    <property type="match status" value="1"/>
</dbReference>
<dbReference type="NCBIfam" id="NF009291">
    <property type="entry name" value="PRK12651.1-1"/>
    <property type="match status" value="1"/>
</dbReference>
<dbReference type="PANTHER" id="PTHR34584">
    <property type="entry name" value="NA(+)/H(+) ANTIPORTER SUBUNIT E1"/>
    <property type="match status" value="1"/>
</dbReference>
<dbReference type="PANTHER" id="PTHR34584:SF1">
    <property type="entry name" value="NA(+)_H(+) ANTIPORTER SUBUNIT E1"/>
    <property type="match status" value="1"/>
</dbReference>
<dbReference type="Pfam" id="PF01899">
    <property type="entry name" value="MNHE"/>
    <property type="match status" value="1"/>
</dbReference>
<dbReference type="PIRSF" id="PIRSF019239">
    <property type="entry name" value="MrpE"/>
    <property type="match status" value="1"/>
</dbReference>
<organism>
    <name type="scientific">Staphylococcus aureus (strain COL)</name>
    <dbReference type="NCBI Taxonomy" id="93062"/>
    <lineage>
        <taxon>Bacteria</taxon>
        <taxon>Bacillati</taxon>
        <taxon>Bacillota</taxon>
        <taxon>Bacilli</taxon>
        <taxon>Bacillales</taxon>
        <taxon>Staphylococcaceae</taxon>
        <taxon>Staphylococcus</taxon>
    </lineage>
</organism>
<gene>
    <name type="primary">mnhE1</name>
    <name type="ordered locus">SACOL0951</name>
</gene>